<dbReference type="EMBL" id="AJ238632">
    <property type="protein sequence ID" value="CAB42595.1"/>
    <property type="molecule type" value="mRNA"/>
</dbReference>
<dbReference type="SMR" id="Q9XFY6"/>
<dbReference type="eggNOG" id="KOG1566">
    <property type="taxonomic scope" value="Eukaryota"/>
</dbReference>
<dbReference type="GO" id="GO:0043539">
    <property type="term" value="F:protein serine/threonine kinase activator activity"/>
    <property type="evidence" value="ECO:0007669"/>
    <property type="project" value="TreeGrafter"/>
</dbReference>
<dbReference type="GO" id="GO:0035556">
    <property type="term" value="P:intracellular signal transduction"/>
    <property type="evidence" value="ECO:0007669"/>
    <property type="project" value="TreeGrafter"/>
</dbReference>
<dbReference type="Gene3D" id="1.25.10.10">
    <property type="entry name" value="Leucine-rich Repeat Variant"/>
    <property type="match status" value="1"/>
</dbReference>
<dbReference type="InterPro" id="IPR011989">
    <property type="entry name" value="ARM-like"/>
</dbReference>
<dbReference type="InterPro" id="IPR016024">
    <property type="entry name" value="ARM-type_fold"/>
</dbReference>
<dbReference type="InterPro" id="IPR013878">
    <property type="entry name" value="Mo25"/>
</dbReference>
<dbReference type="PANTHER" id="PTHR10182">
    <property type="entry name" value="CALCIUM-BINDING PROTEIN 39-RELATED"/>
    <property type="match status" value="1"/>
</dbReference>
<dbReference type="PANTHER" id="PTHR10182:SF3">
    <property type="entry name" value="PROTEIN MO25"/>
    <property type="match status" value="1"/>
</dbReference>
<dbReference type="Pfam" id="PF08569">
    <property type="entry name" value="Mo25"/>
    <property type="match status" value="1"/>
</dbReference>
<dbReference type="SUPFAM" id="SSF48371">
    <property type="entry name" value="ARM repeat"/>
    <property type="match status" value="1"/>
</dbReference>
<sequence>MWRSWLREAHQSFERLPYESKQDRVVEDISKAIMSIKEAIFGEDEQSSSKEHAQGIASEACRVGLVSDLVTYLTVLDFETRKDVVQIFCAIIRITLEDGGRPGRDYVLAHPDVLSTLFYGYEDPEIALNCGQMFRECIRHEDIAKFVLECNLFEELFEKLNVQSFEVASDAFATFKDLLTRHKQLVAAFLQENYEDFFSQLDKLLTSDNYVTRRQSLKLLGELLLDRVNVKIMMQYVSDVNNLILMMNLLKDSSRSIQFEAFHVFKVFVANPNKTKPVADILVNNKNKLLTYLEDFHNDRDDEQFKEEKAVIIKEISMMHA</sequence>
<evidence type="ECO:0000305" key="1"/>
<organism>
    <name type="scientific">Auxenochlorella protothecoides</name>
    <name type="common">Green microalga</name>
    <name type="synonym">Chlorella protothecoides</name>
    <dbReference type="NCBI Taxonomy" id="3075"/>
    <lineage>
        <taxon>Eukaryota</taxon>
        <taxon>Viridiplantae</taxon>
        <taxon>Chlorophyta</taxon>
        <taxon>core chlorophytes</taxon>
        <taxon>Trebouxiophyceae</taxon>
        <taxon>Chlorellales</taxon>
        <taxon>Chlorellaceae</taxon>
        <taxon>Auxenochlorella</taxon>
    </lineage>
</organism>
<comment type="similarity">
    <text evidence="1">Belongs to the Mo25 family.</text>
</comment>
<name>DEE76_AUXPR</name>
<reference key="1">
    <citation type="journal article" date="2000" name="Plant Mol. Biol.">
        <title>Chlorophyll breakdown in Chlorella protothecoides: characterization of degreening and cloning of degreening-related genes.</title>
        <authorList>
            <person name="Hortensteiner S."/>
            <person name="Chinner J."/>
            <person name="Matile P."/>
            <person name="Thomas H."/>
            <person name="Donnison I.S."/>
        </authorList>
    </citation>
    <scope>NUCLEOTIDE SEQUENCE [MRNA]</scope>
    <source>
        <strain>ACC25</strain>
    </source>
</reference>
<accession>Q9XFY6</accession>
<proteinExistence type="evidence at transcript level"/>
<feature type="chain" id="PRO_0000209834" description="Degreening-related gene dee76 protein">
    <location>
        <begin position="1"/>
        <end position="321"/>
    </location>
</feature>
<gene>
    <name type="primary">DEE76</name>
</gene>
<protein>
    <recommendedName>
        <fullName>Degreening-related gene dee76 protein</fullName>
    </recommendedName>
</protein>